<organism>
    <name type="scientific">Oryctolagus cuniculus</name>
    <name type="common">Rabbit</name>
    <dbReference type="NCBI Taxonomy" id="9986"/>
    <lineage>
        <taxon>Eukaryota</taxon>
        <taxon>Metazoa</taxon>
        <taxon>Chordata</taxon>
        <taxon>Craniata</taxon>
        <taxon>Vertebrata</taxon>
        <taxon>Euteleostomi</taxon>
        <taxon>Mammalia</taxon>
        <taxon>Eutheria</taxon>
        <taxon>Euarchontoglires</taxon>
        <taxon>Glires</taxon>
        <taxon>Lagomorpha</taxon>
        <taxon>Leporidae</taxon>
        <taxon>Oryctolagus</taxon>
    </lineage>
</organism>
<feature type="chain" id="PRO_0000213323" description="Eukaryotic translation initiation factor 4 gamma 1">
    <location>
        <begin position="1"/>
        <end position="1402"/>
    </location>
</feature>
<feature type="domain" description="MIF4G" evidence="4">
    <location>
        <begin position="567"/>
        <end position="793"/>
    </location>
</feature>
<feature type="domain" description="MI" evidence="4">
    <location>
        <begin position="1044"/>
        <end position="1166"/>
    </location>
</feature>
<feature type="domain" description="W2" evidence="3">
    <location>
        <begin position="1231"/>
        <end position="1401"/>
    </location>
</feature>
<feature type="region of interest" description="Disordered" evidence="5">
    <location>
        <begin position="1"/>
        <end position="123"/>
    </location>
</feature>
<feature type="region of interest" description="Disordered" evidence="5">
    <location>
        <begin position="165"/>
        <end position="402"/>
    </location>
</feature>
<feature type="region of interest" description="Disordered" evidence="5">
    <location>
        <begin position="476"/>
        <end position="517"/>
    </location>
</feature>
<feature type="region of interest" description="Disordered" evidence="5">
    <location>
        <begin position="536"/>
        <end position="563"/>
    </location>
</feature>
<feature type="region of interest" description="Disordered" evidence="5">
    <location>
        <begin position="600"/>
        <end position="636"/>
    </location>
</feature>
<feature type="region of interest" description="Disordered" evidence="5">
    <location>
        <begin position="828"/>
        <end position="1028"/>
    </location>
</feature>
<feature type="compositionally biased region" description="Low complexity" evidence="5">
    <location>
        <begin position="53"/>
        <end position="64"/>
    </location>
</feature>
<feature type="compositionally biased region" description="Pro residues" evidence="5">
    <location>
        <begin position="65"/>
        <end position="76"/>
    </location>
</feature>
<feature type="compositionally biased region" description="Low complexity" evidence="5">
    <location>
        <begin position="238"/>
        <end position="251"/>
    </location>
</feature>
<feature type="compositionally biased region" description="Acidic residues" evidence="5">
    <location>
        <begin position="261"/>
        <end position="275"/>
    </location>
</feature>
<feature type="compositionally biased region" description="Basic and acidic residues" evidence="5">
    <location>
        <begin position="280"/>
        <end position="290"/>
    </location>
</feature>
<feature type="compositionally biased region" description="Basic and acidic residues" evidence="5">
    <location>
        <begin position="324"/>
        <end position="340"/>
    </location>
</feature>
<feature type="compositionally biased region" description="Low complexity" evidence="5">
    <location>
        <begin position="359"/>
        <end position="370"/>
    </location>
</feature>
<feature type="compositionally biased region" description="Basic and acidic residues" evidence="5">
    <location>
        <begin position="379"/>
        <end position="388"/>
    </location>
</feature>
<feature type="compositionally biased region" description="Low complexity" evidence="5">
    <location>
        <begin position="479"/>
        <end position="488"/>
    </location>
</feature>
<feature type="compositionally biased region" description="Basic and acidic residues" evidence="5">
    <location>
        <begin position="547"/>
        <end position="563"/>
    </location>
</feature>
<feature type="compositionally biased region" description="Polar residues" evidence="5">
    <location>
        <begin position="602"/>
        <end position="621"/>
    </location>
</feature>
<feature type="compositionally biased region" description="Low complexity" evidence="5">
    <location>
        <begin position="892"/>
        <end position="913"/>
    </location>
</feature>
<feature type="compositionally biased region" description="Polar residues" evidence="5">
    <location>
        <begin position="918"/>
        <end position="937"/>
    </location>
</feature>
<feature type="compositionally biased region" description="Basic and acidic residues" evidence="5">
    <location>
        <begin position="949"/>
        <end position="981"/>
    </location>
</feature>
<feature type="compositionally biased region" description="Basic and acidic residues" evidence="5">
    <location>
        <begin position="989"/>
        <end position="1028"/>
    </location>
</feature>
<feature type="modified residue" description="Phosphothreonine" evidence="1">
    <location>
        <position position="11"/>
    </location>
</feature>
<feature type="modified residue" description="Phosphothreonine" evidence="1">
    <location>
        <position position="27"/>
    </location>
</feature>
<feature type="modified residue" description="Phosphoserine" evidence="1">
    <location>
        <position position="120"/>
    </location>
</feature>
<feature type="modified residue" description="Phosphothreonine" evidence="1">
    <location>
        <position position="452"/>
    </location>
</feature>
<feature type="modified residue" description="Omega-N-methylarginine" evidence="1">
    <location>
        <position position="490"/>
    </location>
</feature>
<feature type="modified residue" description="Omega-N-methylarginine" evidence="1">
    <location>
        <position position="499"/>
    </location>
</feature>
<feature type="modified residue" description="Phosphoserine" evidence="1">
    <location>
        <position position="832"/>
    </location>
</feature>
<feature type="modified residue" description="Omega-N-methylarginine" evidence="1">
    <location>
        <position position="836"/>
    </location>
</feature>
<feature type="modified residue" description="Omega-N-methylarginine" evidence="1">
    <location>
        <position position="846"/>
    </location>
</feature>
<feature type="modified residue" description="Phosphoserine" evidence="1">
    <location>
        <position position="881"/>
    </location>
</feature>
<feature type="modified residue" description="Phosphoserine" evidence="1">
    <location>
        <position position="896"/>
    </location>
</feature>
<feature type="modified residue" description="N6-acetyllysine" evidence="1">
    <location>
        <position position="899"/>
    </location>
</feature>
<feature type="modified residue" description="Phosphoserine" evidence="1">
    <location>
        <position position="948"/>
    </location>
</feature>
<feature type="modified residue" description="Phosphoserine" evidence="1">
    <location>
        <position position="950"/>
    </location>
</feature>
<feature type="modified residue" description="Phosphoserine; by PKC/PRKCA" evidence="1">
    <location>
        <position position="988"/>
    </location>
</feature>
<feature type="modified residue" description="Phosphoserine" evidence="1">
    <location>
        <position position="990"/>
    </location>
</feature>
<feature type="modified residue" description="Phosphoserine" evidence="1">
    <location>
        <position position="997"/>
    </location>
</feature>
<feature type="modified residue" description="Phosphoserine" evidence="1">
    <location>
        <position position="1012"/>
    </location>
</feature>
<feature type="modified residue" description="Phosphothreonine" evidence="1">
    <location>
        <position position="1014"/>
    </location>
</feature>
<feature type="modified residue" description="Phosphoserine" evidence="1">
    <location>
        <position position="1034"/>
    </location>
</feature>
<feature type="modified residue" description="Phosphoserine" evidence="1">
    <location>
        <position position="1041"/>
    </location>
</feature>
<feature type="modified residue" description="Phosphoserine" evidence="1">
    <location>
        <position position="1399"/>
    </location>
</feature>
<keyword id="KW-0007">Acetylation</keyword>
<keyword id="KW-0963">Cytoplasm</keyword>
<keyword id="KW-0903">Direct protein sequencing</keyword>
<keyword id="KW-0396">Initiation factor</keyword>
<keyword id="KW-0488">Methylation</keyword>
<keyword id="KW-0539">Nucleus</keyword>
<keyword id="KW-0597">Phosphoprotein</keyword>
<keyword id="KW-0648">Protein biosynthesis</keyword>
<keyword id="KW-1185">Reference proteome</keyword>
<keyword id="KW-0694">RNA-binding</keyword>
<keyword id="KW-0810">Translation regulation</keyword>
<gene>
    <name type="primary">EIF4G1</name>
    <name type="synonym">EIF4G</name>
</gene>
<name>IF4G1_RABIT</name>
<protein>
    <recommendedName>
        <fullName>Eukaryotic translation initiation factor 4 gamma 1</fullName>
        <shortName>eIF-4-gamma 1</shortName>
        <shortName>eIF-4G 1</shortName>
        <shortName>eIF-4G1</shortName>
    </recommendedName>
    <alternativeName>
        <fullName>p220</fullName>
    </alternativeName>
</protein>
<comment type="function">
    <text evidence="1">Component of the protein complex eIF4F, which is involved in the recognition of the mRNA cap, ATP-dependent unwinding of 5'-terminal secondary structure and recruitment of mRNA to the ribosome. Exists in two complexes, either with EIF1 or with EIF4E (mutually exclusive). Together with EIF1, is required for leaky scanning, in particular for avoiding cap-proximal start codon. Together with EIF4E, antagonizes the scanning promoted by EIF1-EIF4G1 and locates the start codon (through a TISU element) without scanning. As a member of the eIF4F complex, required for endoplasmic reticulum stress-induced ATF4 mRNA translation.</text>
</comment>
<comment type="subunit">
    <text evidence="1 2">eIF4F is a multi-subunit complex, the composition of which varies with external and internal environmental conditions. It is composed of at least EIF4A, EIF4E (cap-binding) and EIF4G1/EIF4G3. Interacts with eIF3 complex, mutually exclusive with EIF4A1 or EIF4A2, EIF4E and through its N-terminus with PABPC1. Interacts with EIF4E or with EIF1 (mutually exclusive) through a common binding site. Interacts through its C-terminus with the serine/threonine kinases MKNK1, and with MKNK2. Appears to act as a scaffold protein, holding these enzymes in place to phosphorylate EIF4E. Non-phosphorylated EIF4EBP1 competes with EIF4G1/EIF4G3 to interact with EIF4E; insulin stimulated MAP-kinase (MAPK1 and MAPK3) phosphorylation of EIF4EBP1 causes dissociation of the complex allowing EIF4G1/EIF4G3 to bind and consequent initiation of translation. EIF4G1/EIF4G3 interacts with PABPC1 to bring about circularization of the mRNA. Interacts with EIF4E3. Interacts with CIRBP and MIF4GD. Interacts with RBM4. Interacts with HNRNPD/AUF1; the interaction requires RNA. Interacts with DDX3X; the interaction requires RNA. Interacts with DAZAP2 (By similarity).</text>
</comment>
<comment type="subcellular location">
    <subcellularLocation>
        <location evidence="1">Cytoplasm</location>
    </subcellularLocation>
    <subcellularLocation>
        <location evidence="1">Nucleus</location>
    </subcellularLocation>
    <subcellularLocation>
        <location evidence="1">Cytoplasm</location>
        <location evidence="1">Stress granule</location>
    </subcellularLocation>
</comment>
<comment type="PTM">
    <text evidence="1">Phosphorylated at multiple sites in vivo. Phosphorylation at Ser-988 by PRKCA induces binding to MKNK1.</text>
</comment>
<comment type="similarity">
    <text evidence="6">Belongs to the eukaryotic initiation factor 4G family.</text>
</comment>
<sequence length="1402" mass="154051">MSGARTVSTPTPPQTGGGVEPQANGETPQVAVIVRSDDRSQGAIIGGRPGLPGPEHSPSESQPSSPSPTPSPPPILEPGSEPNLAVLSLPGDTMTSGMIQMPVEEPAPISREAGEPYCLSPEPTPLAEPILEVEVTLSKPVPVSEFSSSPIQVLTPLASHKMEIHEPNGVVPSEDLEPEVESSPELAPPPPPACLSESPVPIAPTTQPEELLNGAPSPPAVDLSPVCEPEDQAKEDTASATPPAVPSATPATAPPATSPAQEEEGEEEEEEEEGEAGAAESDKGGEDLHPTESTPVPGHLPQNVEAVAATQVAVSVPKRRRKIKELNKKEAVGDLLDAFKEVNPAVPEVENQPPAGNNPTPESEGSSGPSRPEEADETWDAKEDKIHNAENIQPGEQKYEYKSDQWRPLNLEEKKRYDREFLLGFQFIFCQYAEAGGLPHISDVVLEKANKTPLRPLDPSRLSGINCGPDFTPSFANLGRPALSSRGPPRGGPGGELPRGAAGLGPRRSLQPRPPKGARKLIASVIMTEDIKLNKAEKAWKPSSKRTAADKDRGEEDADGSKTQDLFRRVRSILNKLTPQMFQQLMKQVTQLAIDTEGASKGSLTSSLRRPFQNPTSQWPSQHVPLPHGAESATTEKPTVTVNFRKLLLNRCQKEFEKDKDDDEVFEKKQKEMDEAATAEERERLKEELEEARDIARRCSLGNIKFIGELFKLKMLTEAIMHDCVVKLLRHDEESLEFLCRLLTTIGKDLDFEKAKPRMDQYFNQMEKIIKEKKTSSRIRFMLQDVLDLRQSNWVPRRGDQGPKTIDQIHKEAEMEEHREHIKVQQLMAKGSDKRRGGPPGPPISRGLPLVDDGGWNTVPISKGSRPIDTSRLTKITKPGSIDSNNQLFAPGGRLSWGKGSSGSGAKPSDAASEVSRPATSTLNRFSALQQAVPTESTDNRRVVQRSSLSRERGGKAGEPRRRLERSERGGDRGDRLDRARTPATKRSFSKEVEERSRERPSQPEGLRKAASLTEDRDRGRDAAKREAALPPVSCAKAALSEEELEKKSKAIIEEYLHLNDMKEAVQCVQELASPSLLFIFVRHGIESTLERSAIARERMGQLLHQLLCAGHLSTAQYYQGLYEILELAEDMEIDIPHVWLYLAELVTPIMQEGGVPMGELFREITKHLRPLGKAASLLLEILRLLCKSKGPKKVAYCGVRLGSAGKNFCLEGQDVGAFITEQKVEYTLGEESEAPGQRALSSEELSRQLEKVLKEGSSNQRVFDWIEANLSEQQIASNTLVRALMTAVCYSAIIFETPLRVDVAVLKGDRICYRNTCVIAEGAARLYALQALVVTLEQPANLLRMFFDALYDEDVVKEEAFYSWESSKDPAEQQGKGVALKSVTAFFKWLREVEEEESDHN</sequence>
<proteinExistence type="evidence at protein level"/>
<reference key="1">
    <citation type="journal article" date="1993" name="J. Biol. Chem.">
        <title>Mapping the cleavage site in protein synthesis initiation factor eIF-4 gamma of the 2A proteases from human Coxsackievirus and rhinovirus.</title>
        <authorList>
            <person name="Lamphear B.J."/>
            <person name="Yan R."/>
            <person name="Yang F."/>
            <person name="Waters D."/>
            <person name="Liebig H.-D."/>
            <person name="Klump H."/>
            <person name="Kuechler E."/>
            <person name="Skern T."/>
            <person name="Rhoads R.E."/>
        </authorList>
    </citation>
    <scope>NUCLEOTIDE SEQUENCE [MRNA]</scope>
    <scope>PROTEIN SEQUENCE OF 479-500</scope>
    <source>
        <strain>New Zealand white</strain>
        <tissue>Brain</tissue>
    </source>
</reference>
<reference key="2">
    <citation type="journal article" date="1992" name="J. Biol. Chem.">
        <title>Amino acid sequence of the human protein synthesis initiation factor eIF-4 gamma.</title>
        <authorList>
            <person name="Yan R."/>
            <person name="Rychlik W."/>
            <person name="Etchison D."/>
            <person name="Rhoads R.E."/>
        </authorList>
    </citation>
    <scope>PARTIAL PROTEIN SEQUENCE</scope>
</reference>
<evidence type="ECO:0000250" key="1">
    <source>
        <dbReference type="UniProtKB" id="Q04637"/>
    </source>
</evidence>
<evidence type="ECO:0000250" key="2">
    <source>
        <dbReference type="UniProtKB" id="Q6NZJ6"/>
    </source>
</evidence>
<evidence type="ECO:0000255" key="3">
    <source>
        <dbReference type="PROSITE-ProRule" id="PRU00695"/>
    </source>
</evidence>
<evidence type="ECO:0000255" key="4">
    <source>
        <dbReference type="PROSITE-ProRule" id="PRU00698"/>
    </source>
</evidence>
<evidence type="ECO:0000256" key="5">
    <source>
        <dbReference type="SAM" id="MobiDB-lite"/>
    </source>
</evidence>
<evidence type="ECO:0000305" key="6"/>
<accession>P41110</accession>
<dbReference type="EMBL" id="L22090">
    <property type="protein sequence ID" value="AAA31242.1"/>
    <property type="molecule type" value="mRNA"/>
</dbReference>
<dbReference type="PIR" id="I46707">
    <property type="entry name" value="I46707"/>
</dbReference>
<dbReference type="SMR" id="P41110"/>
<dbReference type="STRING" id="9986.ENSOCUP00000032992"/>
<dbReference type="PaxDb" id="9986-ENSOCUP00000005299"/>
<dbReference type="eggNOG" id="KOG0401">
    <property type="taxonomic scope" value="Eukaryota"/>
</dbReference>
<dbReference type="eggNOG" id="KOG3571">
    <property type="taxonomic scope" value="Eukaryota"/>
</dbReference>
<dbReference type="InParanoid" id="P41110"/>
<dbReference type="Proteomes" id="UP000001811">
    <property type="component" value="Unplaced"/>
</dbReference>
<dbReference type="GO" id="GO:0005737">
    <property type="term" value="C:cytoplasm"/>
    <property type="evidence" value="ECO:0000250"/>
    <property type="project" value="UniProtKB"/>
</dbReference>
<dbReference type="GO" id="GO:0010494">
    <property type="term" value="C:cytoplasmic stress granule"/>
    <property type="evidence" value="ECO:0000250"/>
    <property type="project" value="UniProtKB"/>
</dbReference>
<dbReference type="GO" id="GO:0016281">
    <property type="term" value="C:eukaryotic translation initiation factor 4F complex"/>
    <property type="evidence" value="ECO:0007669"/>
    <property type="project" value="TreeGrafter"/>
</dbReference>
<dbReference type="GO" id="GO:0005634">
    <property type="term" value="C:nucleus"/>
    <property type="evidence" value="ECO:0000250"/>
    <property type="project" value="UniProtKB"/>
</dbReference>
<dbReference type="GO" id="GO:0003729">
    <property type="term" value="F:mRNA binding"/>
    <property type="evidence" value="ECO:0007669"/>
    <property type="project" value="TreeGrafter"/>
</dbReference>
<dbReference type="GO" id="GO:0003743">
    <property type="term" value="F:translation initiation factor activity"/>
    <property type="evidence" value="ECO:0007669"/>
    <property type="project" value="UniProtKB-KW"/>
</dbReference>
<dbReference type="GO" id="GO:0036493">
    <property type="term" value="P:positive regulation of translation in response to endoplasmic reticulum stress"/>
    <property type="evidence" value="ECO:0000250"/>
    <property type="project" value="UniProtKB"/>
</dbReference>
<dbReference type="CDD" id="cd11559">
    <property type="entry name" value="W2_eIF4G1_like"/>
    <property type="match status" value="1"/>
</dbReference>
<dbReference type="FunFam" id="1.25.40.180:FF:000001">
    <property type="entry name" value="Eukaryotic translation initiation factor 4 gamma, 3, putative"/>
    <property type="match status" value="1"/>
</dbReference>
<dbReference type="FunFam" id="1.25.40.180:FF:000002">
    <property type="entry name" value="Eukaryotic translation initiation factor 4 gamma, 3, putative"/>
    <property type="match status" value="1"/>
</dbReference>
<dbReference type="FunFam" id="1.25.40.180:FF:000003">
    <property type="entry name" value="Putative eukaryotic translation initiation factor 4 gamma 1"/>
    <property type="match status" value="1"/>
</dbReference>
<dbReference type="Gene3D" id="1.25.40.180">
    <property type="match status" value="3"/>
</dbReference>
<dbReference type="InterPro" id="IPR016024">
    <property type="entry name" value="ARM-type_fold"/>
</dbReference>
<dbReference type="InterPro" id="IPR003891">
    <property type="entry name" value="Initiation_fac_eIF4g_MI"/>
</dbReference>
<dbReference type="InterPro" id="IPR003890">
    <property type="entry name" value="MIF4G-like_typ-3"/>
</dbReference>
<dbReference type="InterPro" id="IPR003307">
    <property type="entry name" value="W2_domain"/>
</dbReference>
<dbReference type="PANTHER" id="PTHR23253">
    <property type="entry name" value="EUKARYOTIC TRANSLATION INITIATION FACTOR 4 GAMMA"/>
    <property type="match status" value="1"/>
</dbReference>
<dbReference type="PANTHER" id="PTHR23253:SF10">
    <property type="entry name" value="EUKARYOTIC TRANSLATION INITIATION FACTOR 4 GAMMA 1"/>
    <property type="match status" value="1"/>
</dbReference>
<dbReference type="Pfam" id="PF02847">
    <property type="entry name" value="MA3"/>
    <property type="match status" value="1"/>
</dbReference>
<dbReference type="Pfam" id="PF02854">
    <property type="entry name" value="MIF4G"/>
    <property type="match status" value="1"/>
</dbReference>
<dbReference type="Pfam" id="PF02020">
    <property type="entry name" value="W2"/>
    <property type="match status" value="1"/>
</dbReference>
<dbReference type="SMART" id="SM00515">
    <property type="entry name" value="eIF5C"/>
    <property type="match status" value="1"/>
</dbReference>
<dbReference type="SMART" id="SM00544">
    <property type="entry name" value="MA3"/>
    <property type="match status" value="1"/>
</dbReference>
<dbReference type="SMART" id="SM00543">
    <property type="entry name" value="MIF4G"/>
    <property type="match status" value="1"/>
</dbReference>
<dbReference type="SUPFAM" id="SSF48371">
    <property type="entry name" value="ARM repeat"/>
    <property type="match status" value="3"/>
</dbReference>
<dbReference type="PROSITE" id="PS51366">
    <property type="entry name" value="MI"/>
    <property type="match status" value="1"/>
</dbReference>
<dbReference type="PROSITE" id="PS51363">
    <property type="entry name" value="W2"/>
    <property type="match status" value="1"/>
</dbReference>